<comment type="function">
    <text evidence="1 3">Transaldolase involved in the biosynthesis of the capuramycin-type nucleoside antibiotic A-102395 (PubMed:25855790). Catalyzes the condensation of L-threonine and uridine-5'-aldehyde to form 5'-C-glycyluridine (GlyU) (By similarity).</text>
</comment>
<comment type="catalytic activity">
    <reaction evidence="1">
        <text>uridine-5'-aldehyde + L-threonine = (5'S,6'S)-C-glycyluridine + acetaldehyde</text>
        <dbReference type="Rhea" id="RHEA:77183"/>
        <dbReference type="ChEBI" id="CHEBI:15343"/>
        <dbReference type="ChEBI" id="CHEBI:57926"/>
        <dbReference type="ChEBI" id="CHEBI:86258"/>
        <dbReference type="ChEBI" id="CHEBI:229461"/>
    </reaction>
    <physiologicalReaction direction="left-to-right" evidence="1">
        <dbReference type="Rhea" id="RHEA:77184"/>
    </physiologicalReaction>
</comment>
<comment type="cofactor">
    <cofactor evidence="1">
        <name>pyridoxal 5'-phosphate</name>
        <dbReference type="ChEBI" id="CHEBI:597326"/>
    </cofactor>
</comment>
<comment type="pathway">
    <text evidence="3">Antibiotic biosynthesis.</text>
</comment>
<comment type="disruption phenotype">
    <text evidence="3">Inactivation of the gene abolishes A-102395 production.</text>
</comment>
<comment type="similarity">
    <text evidence="5">Belongs to the SHMT family.</text>
</comment>
<sequence length="412" mass="45228">MTDTNELRKVLHRFRSQQEKAEFSVNLVPSENKLSPLAQLPLRSDYYNRYFFNDALDPGFWQFRGGQDVAEMETELTVDHLSRLARAPHVNERPISGLSAMMIAMAGLGGKPGGTVVSIDAASGGHYATASMARRLGFESATVPVVRGQVDEQRLEQVLCRHEPELIYLDLQNSRHELEVSRVADLVGRHSRQTLLHVDCSHTMGLVLGGALGNPLDAGANTMGGSTHKTFPGPHKGVLFTRTPELHQRMREAQFTMLSSHHFAETLALGLASAEFSHFGPAYAEQVIGNAQLFSKLLASEGFDVATDEDGHTTSTHQIWVKIGDAEQTDRISQSLYDHGIRVNVQVDLPGMPGPVLRLGISELTFVGGREAAVHALAREFSNARAGVRRDGSGSRRVREQCGSPFHFVDYP</sequence>
<evidence type="ECO:0000250" key="1">
    <source>
        <dbReference type="UniProtKB" id="E1CG38"/>
    </source>
</evidence>
<evidence type="ECO:0000250" key="2">
    <source>
        <dbReference type="UniProtKB" id="P0A825"/>
    </source>
</evidence>
<evidence type="ECO:0000269" key="3">
    <source>
    </source>
</evidence>
<evidence type="ECO:0000303" key="4">
    <source>
    </source>
</evidence>
<evidence type="ECO:0000305" key="5"/>
<keyword id="KW-0045">Antibiotic biosynthesis</keyword>
<keyword id="KW-0663">Pyridoxal phosphate</keyword>
<keyword id="KW-0808">Transferase</keyword>
<gene>
    <name evidence="4" type="primary">cpr25</name>
</gene>
<protein>
    <recommendedName>
        <fullName evidence="5">L-threonine:uridine-5'-aldehyde transaldolase</fullName>
        <shortName evidence="4">L-Thr:UA transaldolase</shortName>
        <shortName evidence="4">L-Thr:uridine-5'-aldehyde transaldolase</shortName>
        <ecNumber evidence="1">2.2.1.-</ecNumber>
    </recommendedName>
</protein>
<proteinExistence type="inferred from homology"/>
<feature type="chain" id="PRO_0000459782" description="L-threonine:uridine-5'-aldehyde transaldolase">
    <location>
        <begin position="1"/>
        <end position="412"/>
    </location>
</feature>
<feature type="modified residue" description="N6-(pyridoxal phosphate)lysine" evidence="2">
    <location>
        <position position="229"/>
    </location>
</feature>
<accession>A0A0E3Z9M4</accession>
<reference key="1">
    <citation type="journal article" date="2015" name="J. Biol. Chem.">
        <title>The biosynthesis of capuramycin-type antibiotics: identification of the A-102395 biosynthetic gene cluster, mechanism of self-resistance, and formation of uridine-5'-carboxamide.</title>
        <authorList>
            <person name="Cai W."/>
            <person name="Goswami A."/>
            <person name="Yang Z."/>
            <person name="Liu X."/>
            <person name="Green K.D."/>
            <person name="Barnard-Britson S."/>
            <person name="Baba S."/>
            <person name="Funabashi M."/>
            <person name="Nonaka K."/>
            <person name="Sunkara M."/>
            <person name="Morris A.J."/>
            <person name="Spork A.P."/>
            <person name="Ducho C."/>
            <person name="Garneau-Tsodikova S."/>
            <person name="Thorson J.S."/>
            <person name="Van Lanen S.G."/>
        </authorList>
    </citation>
    <scope>NUCLEOTIDE SEQUENCE [GENOMIC DNA]</scope>
    <scope>FUNCTION</scope>
    <scope>PATHWAY</scope>
    <scope>DISRUPTION PHENOTYPE</scope>
    <source>
        <strain>SANK 60206</strain>
    </source>
</reference>
<name>THTA_AMYSP</name>
<dbReference type="EC" id="2.2.1.-" evidence="1"/>
<dbReference type="EMBL" id="KP995196">
    <property type="protein sequence ID" value="AKC92637.1"/>
    <property type="molecule type" value="Genomic_DNA"/>
</dbReference>
<dbReference type="SMR" id="A0A0E3Z9M4"/>
<dbReference type="GO" id="GO:0005737">
    <property type="term" value="C:cytoplasm"/>
    <property type="evidence" value="ECO:0007669"/>
    <property type="project" value="TreeGrafter"/>
</dbReference>
<dbReference type="GO" id="GO:0004372">
    <property type="term" value="F:glycine hydroxymethyltransferase activity"/>
    <property type="evidence" value="ECO:0007669"/>
    <property type="project" value="TreeGrafter"/>
</dbReference>
<dbReference type="GO" id="GO:0030170">
    <property type="term" value="F:pyridoxal phosphate binding"/>
    <property type="evidence" value="ECO:0007669"/>
    <property type="project" value="TreeGrafter"/>
</dbReference>
<dbReference type="GO" id="GO:0017000">
    <property type="term" value="P:antibiotic biosynthetic process"/>
    <property type="evidence" value="ECO:0007669"/>
    <property type="project" value="UniProtKB-KW"/>
</dbReference>
<dbReference type="GO" id="GO:0019264">
    <property type="term" value="P:glycine biosynthetic process from serine"/>
    <property type="evidence" value="ECO:0007669"/>
    <property type="project" value="TreeGrafter"/>
</dbReference>
<dbReference type="GO" id="GO:0046653">
    <property type="term" value="P:tetrahydrofolate metabolic process"/>
    <property type="evidence" value="ECO:0007669"/>
    <property type="project" value="TreeGrafter"/>
</dbReference>
<dbReference type="Gene3D" id="3.90.1150.10">
    <property type="entry name" value="Aspartate Aminotransferase, domain 1"/>
    <property type="match status" value="1"/>
</dbReference>
<dbReference type="Gene3D" id="3.40.640.10">
    <property type="entry name" value="Type I PLP-dependent aspartate aminotransferase-like (Major domain)"/>
    <property type="match status" value="1"/>
</dbReference>
<dbReference type="InterPro" id="IPR015424">
    <property type="entry name" value="PyrdxlP-dep_Trfase"/>
</dbReference>
<dbReference type="InterPro" id="IPR015421">
    <property type="entry name" value="PyrdxlP-dep_Trfase_major"/>
</dbReference>
<dbReference type="InterPro" id="IPR015422">
    <property type="entry name" value="PyrdxlP-dep_Trfase_small"/>
</dbReference>
<dbReference type="InterPro" id="IPR049943">
    <property type="entry name" value="Ser_HO-MeTrfase-like"/>
</dbReference>
<dbReference type="InterPro" id="IPR039429">
    <property type="entry name" value="SHMT-like_dom"/>
</dbReference>
<dbReference type="PANTHER" id="PTHR11680">
    <property type="entry name" value="SERINE HYDROXYMETHYLTRANSFERASE"/>
    <property type="match status" value="1"/>
</dbReference>
<dbReference type="PANTHER" id="PTHR11680:SF35">
    <property type="entry name" value="SERINE HYDROXYMETHYLTRANSFERASE 1"/>
    <property type="match status" value="1"/>
</dbReference>
<dbReference type="Pfam" id="PF00464">
    <property type="entry name" value="SHMT"/>
    <property type="match status" value="1"/>
</dbReference>
<dbReference type="SUPFAM" id="SSF53383">
    <property type="entry name" value="PLP-dependent transferases"/>
    <property type="match status" value="1"/>
</dbReference>
<organism>
    <name type="scientific">Amycolatopsis sp</name>
    <dbReference type="NCBI Taxonomy" id="37632"/>
    <lineage>
        <taxon>Bacteria</taxon>
        <taxon>Bacillati</taxon>
        <taxon>Actinomycetota</taxon>
        <taxon>Actinomycetes</taxon>
        <taxon>Pseudonocardiales</taxon>
        <taxon>Pseudonocardiaceae</taxon>
        <taxon>Amycolatopsis</taxon>
    </lineage>
</organism>